<gene>
    <name evidence="1" type="primary">gloB</name>
    <name type="ordered locus">VP2295</name>
</gene>
<keyword id="KW-0378">Hydrolase</keyword>
<keyword id="KW-0479">Metal-binding</keyword>
<keyword id="KW-0862">Zinc</keyword>
<feature type="chain" id="PRO_0000309721" description="Hydroxyacylglutathione hydrolase">
    <location>
        <begin position="1"/>
        <end position="252"/>
    </location>
</feature>
<feature type="binding site" evidence="1">
    <location>
        <position position="54"/>
    </location>
    <ligand>
        <name>Zn(2+)</name>
        <dbReference type="ChEBI" id="CHEBI:29105"/>
        <label>1</label>
    </ligand>
</feature>
<feature type="binding site" evidence="1">
    <location>
        <position position="56"/>
    </location>
    <ligand>
        <name>Zn(2+)</name>
        <dbReference type="ChEBI" id="CHEBI:29105"/>
        <label>1</label>
    </ligand>
</feature>
<feature type="binding site" evidence="1">
    <location>
        <position position="58"/>
    </location>
    <ligand>
        <name>Zn(2+)</name>
        <dbReference type="ChEBI" id="CHEBI:29105"/>
        <label>2</label>
    </ligand>
</feature>
<feature type="binding site" evidence="1">
    <location>
        <position position="59"/>
    </location>
    <ligand>
        <name>Zn(2+)</name>
        <dbReference type="ChEBI" id="CHEBI:29105"/>
        <label>2</label>
    </ligand>
</feature>
<feature type="binding site" evidence="1">
    <location>
        <position position="111"/>
    </location>
    <ligand>
        <name>Zn(2+)</name>
        <dbReference type="ChEBI" id="CHEBI:29105"/>
        <label>1</label>
    </ligand>
</feature>
<feature type="binding site" evidence="1">
    <location>
        <position position="128"/>
    </location>
    <ligand>
        <name>Zn(2+)</name>
        <dbReference type="ChEBI" id="CHEBI:29105"/>
        <label>1</label>
    </ligand>
</feature>
<feature type="binding site" evidence="1">
    <location>
        <position position="128"/>
    </location>
    <ligand>
        <name>Zn(2+)</name>
        <dbReference type="ChEBI" id="CHEBI:29105"/>
        <label>2</label>
    </ligand>
</feature>
<feature type="binding site" evidence="1">
    <location>
        <position position="166"/>
    </location>
    <ligand>
        <name>Zn(2+)</name>
        <dbReference type="ChEBI" id="CHEBI:29105"/>
        <label>2</label>
    </ligand>
</feature>
<name>GLO2_VIBPA</name>
<evidence type="ECO:0000255" key="1">
    <source>
        <dbReference type="HAMAP-Rule" id="MF_01374"/>
    </source>
</evidence>
<accession>Q87MG0</accession>
<comment type="function">
    <text evidence="1">Thiolesterase that catalyzes the hydrolysis of S-D-lactoyl-glutathione to form glutathione and D-lactic acid.</text>
</comment>
<comment type="catalytic activity">
    <reaction evidence="1">
        <text>an S-(2-hydroxyacyl)glutathione + H2O = a 2-hydroxy carboxylate + glutathione + H(+)</text>
        <dbReference type="Rhea" id="RHEA:21864"/>
        <dbReference type="ChEBI" id="CHEBI:15377"/>
        <dbReference type="ChEBI" id="CHEBI:15378"/>
        <dbReference type="ChEBI" id="CHEBI:57925"/>
        <dbReference type="ChEBI" id="CHEBI:58896"/>
        <dbReference type="ChEBI" id="CHEBI:71261"/>
        <dbReference type="EC" id="3.1.2.6"/>
    </reaction>
</comment>
<comment type="cofactor">
    <cofactor evidence="1">
        <name>Zn(2+)</name>
        <dbReference type="ChEBI" id="CHEBI:29105"/>
    </cofactor>
    <text evidence="1">Binds 2 Zn(2+) ions per subunit.</text>
</comment>
<comment type="pathway">
    <text evidence="1">Secondary metabolite metabolism; methylglyoxal degradation; (R)-lactate from methylglyoxal: step 2/2.</text>
</comment>
<comment type="subunit">
    <text evidence="1">Monomer.</text>
</comment>
<comment type="similarity">
    <text evidence="1">Belongs to the metallo-beta-lactamase superfamily. Glyoxalase II family.</text>
</comment>
<organism>
    <name type="scientific">Vibrio parahaemolyticus serotype O3:K6 (strain RIMD 2210633)</name>
    <dbReference type="NCBI Taxonomy" id="223926"/>
    <lineage>
        <taxon>Bacteria</taxon>
        <taxon>Pseudomonadati</taxon>
        <taxon>Pseudomonadota</taxon>
        <taxon>Gammaproteobacteria</taxon>
        <taxon>Vibrionales</taxon>
        <taxon>Vibrionaceae</taxon>
        <taxon>Vibrio</taxon>
    </lineage>
</organism>
<proteinExistence type="inferred from homology"/>
<protein>
    <recommendedName>
        <fullName evidence="1">Hydroxyacylglutathione hydrolase</fullName>
        <ecNumber evidence="1">3.1.2.6</ecNumber>
    </recommendedName>
    <alternativeName>
        <fullName evidence="1">Glyoxalase II</fullName>
        <shortName evidence="1">Glx II</shortName>
    </alternativeName>
</protein>
<sequence>MLEIKSIPAFNDNYIWLIQNSDKRCAVVDPGDAQPVLDYLQANELTLEAILVTHHHNDHIGGVPDLVRAFPHVTVVGPKAEPIPTLTTPMEEGDKLELFGEIFLVLGLPGHTLGHIGYVGDSKLFCGDVLFSAGCGRIFEGTPEQMFESLSKIAALPEETQVFCAHEYTASNVAFALAVEPDNEQLRQYRDDVNRLRALNIPTLPTTLRKEKWINPFLRTTNPDVVKSVANRIKNSDPCSVFTALREWKNEF</sequence>
<reference key="1">
    <citation type="journal article" date="2003" name="Lancet">
        <title>Genome sequence of Vibrio parahaemolyticus: a pathogenic mechanism distinct from that of V. cholerae.</title>
        <authorList>
            <person name="Makino K."/>
            <person name="Oshima K."/>
            <person name="Kurokawa K."/>
            <person name="Yokoyama K."/>
            <person name="Uda T."/>
            <person name="Tagomori K."/>
            <person name="Iijima Y."/>
            <person name="Najima M."/>
            <person name="Nakano M."/>
            <person name="Yamashita A."/>
            <person name="Kubota Y."/>
            <person name="Kimura S."/>
            <person name="Yasunaga T."/>
            <person name="Honda T."/>
            <person name="Shinagawa H."/>
            <person name="Hattori M."/>
            <person name="Iida T."/>
        </authorList>
    </citation>
    <scope>NUCLEOTIDE SEQUENCE [LARGE SCALE GENOMIC DNA]</scope>
    <source>
        <strain>RIMD 2210633</strain>
    </source>
</reference>
<dbReference type="EC" id="3.1.2.6" evidence="1"/>
<dbReference type="EMBL" id="BA000031">
    <property type="protein sequence ID" value="BAC60558.1"/>
    <property type="molecule type" value="Genomic_DNA"/>
</dbReference>
<dbReference type="RefSeq" id="NP_798674.1">
    <property type="nucleotide sequence ID" value="NC_004603.1"/>
</dbReference>
<dbReference type="RefSeq" id="WP_005456739.1">
    <property type="nucleotide sequence ID" value="NC_004603.1"/>
</dbReference>
<dbReference type="SMR" id="Q87MG0"/>
<dbReference type="GeneID" id="1189808"/>
<dbReference type="KEGG" id="vpa:VP2295"/>
<dbReference type="PATRIC" id="fig|223926.6.peg.2197"/>
<dbReference type="eggNOG" id="COG0491">
    <property type="taxonomic scope" value="Bacteria"/>
</dbReference>
<dbReference type="HOGENOM" id="CLU_030571_4_1_6"/>
<dbReference type="UniPathway" id="UPA00619">
    <property type="reaction ID" value="UER00676"/>
</dbReference>
<dbReference type="Proteomes" id="UP000002493">
    <property type="component" value="Chromosome 1"/>
</dbReference>
<dbReference type="GO" id="GO:0004416">
    <property type="term" value="F:hydroxyacylglutathione hydrolase activity"/>
    <property type="evidence" value="ECO:0007669"/>
    <property type="project" value="UniProtKB-UniRule"/>
</dbReference>
<dbReference type="GO" id="GO:0046872">
    <property type="term" value="F:metal ion binding"/>
    <property type="evidence" value="ECO:0007669"/>
    <property type="project" value="UniProtKB-KW"/>
</dbReference>
<dbReference type="GO" id="GO:0019243">
    <property type="term" value="P:methylglyoxal catabolic process to D-lactate via S-lactoyl-glutathione"/>
    <property type="evidence" value="ECO:0007669"/>
    <property type="project" value="InterPro"/>
</dbReference>
<dbReference type="CDD" id="cd07723">
    <property type="entry name" value="hydroxyacylglutathione_hydrolase_MBL-fold"/>
    <property type="match status" value="1"/>
</dbReference>
<dbReference type="Gene3D" id="3.60.15.10">
    <property type="entry name" value="Ribonuclease Z/Hydroxyacylglutathione hydrolase-like"/>
    <property type="match status" value="1"/>
</dbReference>
<dbReference type="HAMAP" id="MF_01374">
    <property type="entry name" value="Glyoxalase_2"/>
    <property type="match status" value="1"/>
</dbReference>
<dbReference type="InterPro" id="IPR035680">
    <property type="entry name" value="Clx_II_MBL"/>
</dbReference>
<dbReference type="InterPro" id="IPR050110">
    <property type="entry name" value="Glyoxalase_II_hydrolase"/>
</dbReference>
<dbReference type="InterPro" id="IPR032282">
    <property type="entry name" value="HAGH_C"/>
</dbReference>
<dbReference type="InterPro" id="IPR017782">
    <property type="entry name" value="Hydroxyacylglutathione_Hdrlase"/>
</dbReference>
<dbReference type="InterPro" id="IPR001279">
    <property type="entry name" value="Metallo-B-lactamas"/>
</dbReference>
<dbReference type="InterPro" id="IPR036866">
    <property type="entry name" value="RibonucZ/Hydroxyglut_hydro"/>
</dbReference>
<dbReference type="NCBIfam" id="TIGR03413">
    <property type="entry name" value="GSH_gloB"/>
    <property type="match status" value="1"/>
</dbReference>
<dbReference type="PANTHER" id="PTHR43705">
    <property type="entry name" value="HYDROXYACYLGLUTATHIONE HYDROLASE"/>
    <property type="match status" value="1"/>
</dbReference>
<dbReference type="PANTHER" id="PTHR43705:SF1">
    <property type="entry name" value="HYDROXYACYLGLUTATHIONE HYDROLASE GLOB"/>
    <property type="match status" value="1"/>
</dbReference>
<dbReference type="Pfam" id="PF16123">
    <property type="entry name" value="HAGH_C"/>
    <property type="match status" value="1"/>
</dbReference>
<dbReference type="Pfam" id="PF00753">
    <property type="entry name" value="Lactamase_B"/>
    <property type="match status" value="1"/>
</dbReference>
<dbReference type="PIRSF" id="PIRSF005457">
    <property type="entry name" value="Glx"/>
    <property type="match status" value="1"/>
</dbReference>
<dbReference type="SMART" id="SM00849">
    <property type="entry name" value="Lactamase_B"/>
    <property type="match status" value="1"/>
</dbReference>
<dbReference type="SUPFAM" id="SSF56281">
    <property type="entry name" value="Metallo-hydrolase/oxidoreductase"/>
    <property type="match status" value="1"/>
</dbReference>